<reference key="1">
    <citation type="journal article" date="2004" name="Plant Physiol.">
        <title>A comparison of rice chloroplast genomes.</title>
        <authorList>
            <person name="Tang J."/>
            <person name="Xia H."/>
            <person name="Cao M."/>
            <person name="Zhang X."/>
            <person name="Zeng W."/>
            <person name="Hu S."/>
            <person name="Tong W."/>
            <person name="Wang J."/>
            <person name="Wang J."/>
            <person name="Yu J."/>
            <person name="Yang H."/>
            <person name="Zhu L."/>
        </authorList>
    </citation>
    <scope>NUCLEOTIDE SEQUENCE [LARGE SCALE GENOMIC DNA]</scope>
    <source>
        <strain>cv. 93-11</strain>
    </source>
</reference>
<feature type="propeptide" id="PRO_0000431186" evidence="1">
    <location>
        <begin position="1"/>
        <end position="14"/>
    </location>
</feature>
<feature type="chain" id="PRO_0000288994" description="Photosystem II CP43 reaction center protein" evidence="1">
    <location>
        <begin position="15"/>
        <end position="473"/>
    </location>
</feature>
<feature type="transmembrane region" description="Helical" evidence="1">
    <location>
        <begin position="69"/>
        <end position="93"/>
    </location>
</feature>
<feature type="transmembrane region" description="Helical" evidence="1">
    <location>
        <begin position="134"/>
        <end position="155"/>
    </location>
</feature>
<feature type="transmembrane region" description="Helical" evidence="1">
    <location>
        <begin position="178"/>
        <end position="200"/>
    </location>
</feature>
<feature type="transmembrane region" description="Helical" evidence="1">
    <location>
        <begin position="255"/>
        <end position="275"/>
    </location>
</feature>
<feature type="transmembrane region" description="Helical" evidence="1">
    <location>
        <begin position="291"/>
        <end position="312"/>
    </location>
</feature>
<feature type="transmembrane region" description="Helical" evidence="1">
    <location>
        <begin position="447"/>
        <end position="471"/>
    </location>
</feature>
<feature type="binding site" evidence="1">
    <location>
        <position position="367"/>
    </location>
    <ligand>
        <name>[CaMn4O5] cluster</name>
        <dbReference type="ChEBI" id="CHEBI:189552"/>
    </ligand>
</feature>
<feature type="modified residue" description="N-acetylthreonine" evidence="1">
    <location>
        <position position="15"/>
    </location>
</feature>
<feature type="modified residue" description="Phosphothreonine" evidence="1">
    <location>
        <position position="15"/>
    </location>
</feature>
<keyword id="KW-0007">Acetylation</keyword>
<keyword id="KW-0148">Chlorophyll</keyword>
<keyword id="KW-0150">Chloroplast</keyword>
<keyword id="KW-0157">Chromophore</keyword>
<keyword id="KW-0464">Manganese</keyword>
<keyword id="KW-0472">Membrane</keyword>
<keyword id="KW-0479">Metal-binding</keyword>
<keyword id="KW-0597">Phosphoprotein</keyword>
<keyword id="KW-0602">Photosynthesis</keyword>
<keyword id="KW-0604">Photosystem II</keyword>
<keyword id="KW-0934">Plastid</keyword>
<keyword id="KW-1185">Reference proteome</keyword>
<keyword id="KW-0793">Thylakoid</keyword>
<keyword id="KW-0812">Transmembrane</keyword>
<keyword id="KW-1133">Transmembrane helix</keyword>
<dbReference type="EMBL" id="AY522329">
    <property type="protein sequence ID" value="AAS46044.1"/>
    <property type="molecule type" value="Genomic_DNA"/>
</dbReference>
<dbReference type="RefSeq" id="YP_009161350.1">
    <property type="nucleotide sequence ID" value="NC_027678.1"/>
</dbReference>
<dbReference type="RefSeq" id="YP_654204.1">
    <property type="nucleotide sequence ID" value="NC_008155.1"/>
</dbReference>
<dbReference type="SMR" id="P0C366"/>
<dbReference type="STRING" id="39946.P0C366"/>
<dbReference type="GeneID" id="4126920"/>
<dbReference type="Proteomes" id="UP000007015">
    <property type="component" value="Chloroplast"/>
</dbReference>
<dbReference type="GO" id="GO:0009535">
    <property type="term" value="C:chloroplast thylakoid membrane"/>
    <property type="evidence" value="ECO:0007669"/>
    <property type="project" value="UniProtKB-SubCell"/>
</dbReference>
<dbReference type="GO" id="GO:0009523">
    <property type="term" value="C:photosystem II"/>
    <property type="evidence" value="ECO:0007669"/>
    <property type="project" value="UniProtKB-KW"/>
</dbReference>
<dbReference type="GO" id="GO:0009536">
    <property type="term" value="C:plastid"/>
    <property type="evidence" value="ECO:0000305"/>
    <property type="project" value="Gramene"/>
</dbReference>
<dbReference type="GO" id="GO:0016168">
    <property type="term" value="F:chlorophyll binding"/>
    <property type="evidence" value="ECO:0007669"/>
    <property type="project" value="UniProtKB-UniRule"/>
</dbReference>
<dbReference type="GO" id="GO:0045156">
    <property type="term" value="F:electron transporter, transferring electrons within the cyclic electron transport pathway of photosynthesis activity"/>
    <property type="evidence" value="ECO:0007669"/>
    <property type="project" value="InterPro"/>
</dbReference>
<dbReference type="GO" id="GO:0046872">
    <property type="term" value="F:metal ion binding"/>
    <property type="evidence" value="ECO:0007669"/>
    <property type="project" value="UniProtKB-KW"/>
</dbReference>
<dbReference type="GO" id="GO:0009772">
    <property type="term" value="P:photosynthetic electron transport in photosystem II"/>
    <property type="evidence" value="ECO:0007669"/>
    <property type="project" value="InterPro"/>
</dbReference>
<dbReference type="FunFam" id="1.10.10.670:FF:000001">
    <property type="entry name" value="Photosystem II CP43 reaction center protein"/>
    <property type="match status" value="1"/>
</dbReference>
<dbReference type="Gene3D" id="1.10.10.670">
    <property type="entry name" value="photosystem ii from thermosynechococcus elongatus"/>
    <property type="match status" value="1"/>
</dbReference>
<dbReference type="HAMAP" id="MF_01496">
    <property type="entry name" value="PSII_PsbC_CP43"/>
    <property type="match status" value="1"/>
</dbReference>
<dbReference type="InterPro" id="IPR000932">
    <property type="entry name" value="PS_antenna-like"/>
</dbReference>
<dbReference type="InterPro" id="IPR036001">
    <property type="entry name" value="PS_II_antenna-like_sf"/>
</dbReference>
<dbReference type="InterPro" id="IPR005869">
    <property type="entry name" value="PSII_PsbC"/>
</dbReference>
<dbReference type="InterPro" id="IPR044900">
    <property type="entry name" value="PSII_PsbC_sf"/>
</dbReference>
<dbReference type="NCBIfam" id="TIGR01153">
    <property type="entry name" value="psbC"/>
    <property type="match status" value="1"/>
</dbReference>
<dbReference type="Pfam" id="PF00421">
    <property type="entry name" value="PSII"/>
    <property type="match status" value="1"/>
</dbReference>
<dbReference type="SUPFAM" id="SSF161077">
    <property type="entry name" value="Photosystem II antenna protein-like"/>
    <property type="match status" value="1"/>
</dbReference>
<comment type="function">
    <text evidence="1">One of the components of the core complex of photosystem II (PSII). It binds chlorophyll and helps catalyze the primary light-induced photochemical processes of PSII. PSII is a light-driven water:plastoquinone oxidoreductase, using light energy to abstract electrons from H(2)O, generating O(2) and a proton gradient subsequently used for ATP formation.</text>
</comment>
<comment type="cofactor">
    <text evidence="1">Binds multiple chlorophylls and provides some of the ligands for the Ca-4Mn-5O cluster of the oxygen-evolving complex. It may also provide a ligand for a Cl- that is required for oxygen evolution. PSII binds additional chlorophylls, carotenoids and specific lipids.</text>
</comment>
<comment type="subunit">
    <text evidence="1">PSII is composed of 1 copy each of membrane proteins PsbA, PsbB, PsbC, PsbD, PsbE, PsbF, PsbH, PsbI, PsbJ, PsbK, PsbL, PsbM, PsbT, PsbX, PsbY, PsbZ, Psb30/Ycf12, at least 3 peripheral proteins of the oxygen-evolving complex and a large number of cofactors. It forms dimeric complexes.</text>
</comment>
<comment type="subcellular location">
    <subcellularLocation>
        <location evidence="1">Plastid</location>
        <location evidence="1">Chloroplast thylakoid membrane</location>
        <topology evidence="1">Multi-pass membrane protein</topology>
    </subcellularLocation>
</comment>
<comment type="similarity">
    <text evidence="1">Belongs to the PsbB/PsbC family. PsbC subfamily.</text>
</comment>
<protein>
    <recommendedName>
        <fullName evidence="1">Photosystem II CP43 reaction center protein</fullName>
    </recommendedName>
    <alternativeName>
        <fullName evidence="1">PSII 43 kDa protein</fullName>
    </alternativeName>
    <alternativeName>
        <fullName evidence="1">Protein CP-43</fullName>
    </alternativeName>
</protein>
<geneLocation type="chloroplast"/>
<name>PSBC_ORYSI</name>
<evidence type="ECO:0000255" key="1">
    <source>
        <dbReference type="HAMAP-Rule" id="MF_01496"/>
    </source>
</evidence>
<organism>
    <name type="scientific">Oryza sativa subsp. indica</name>
    <name type="common">Rice</name>
    <dbReference type="NCBI Taxonomy" id="39946"/>
    <lineage>
        <taxon>Eukaryota</taxon>
        <taxon>Viridiplantae</taxon>
        <taxon>Streptophyta</taxon>
        <taxon>Embryophyta</taxon>
        <taxon>Tracheophyta</taxon>
        <taxon>Spermatophyta</taxon>
        <taxon>Magnoliopsida</taxon>
        <taxon>Liliopsida</taxon>
        <taxon>Poales</taxon>
        <taxon>Poaceae</taxon>
        <taxon>BOP clade</taxon>
        <taxon>Oryzoideae</taxon>
        <taxon>Oryzeae</taxon>
        <taxon>Oryzinae</taxon>
        <taxon>Oryza</taxon>
        <taxon>Oryza sativa</taxon>
    </lineage>
</organism>
<accession>P0C366</accession>
<accession>P12158</accession>
<accession>Q6QY22</accession>
<accession>Q6QY85</accession>
<sequence>MKILYSLRRFYHVETLFNGTFVLAGRDQETTGFAWWAGNARLINLSGKLLGAHVAHAGLIVFWAGAMNLFEVAHFVPEKPMYEQGLILLPHLATLGWGVGPGGEVLDTFPYFVSGVLHLISSAVLGFGGIYHALLGPETLEESFPFFGYVWKDRNKMTTILGIHLILLGIGAFLLVLKALYFGGIYDTWAPGGGDVRKITNLTLSPGVIFGYLLKSPFGGEGWIVSVDDLEDIIGGHVWLGFICVFGGIWHILTKPFAWARRAFVWSGEAYLSYSLGALSVFGFIACCFVWFNNTAYPSEFYGPTGPEASQAQAFTFLVRDQRLGANVGSAQGPTGLGKYLMRSPTGEVIFGGETMRFWDLRAPWLEPLRGPNGLDLSRLKKDIQPWQERRSAEYMTHAPLGSLNSVGGVATEINAVNYVSPRSWLATSHFVLGFFFFVGHLWHAGRARAAAAGFEKGIDRDLEPVLYMTPLN</sequence>
<proteinExistence type="inferred from homology"/>
<gene>
    <name evidence="1" type="primary">psbC</name>
    <name type="ORF">9311017</name>
</gene>